<name>TRX1_ALHV1</name>
<evidence type="ECO:0000255" key="1">
    <source>
        <dbReference type="HAMAP-Rule" id="MF_04018"/>
    </source>
</evidence>
<sequence>MKTKQDPRDQKNYDSLQSNLFRLIPPTTHKISLARPNGFLRGLADLVGKYSVDGAEESLFQPGAWDAPYVQPAFFDFLVHAKTISKHEPVGVPLFCFKNNSTAPSIDVLFTPISFHAAVGLPADVDPNVHRVAHIWYGDDSEVSSLMEDLNILLEESNLHTRLHPVGILVENNDSSFLNRVTALTHGPAYMSRKQAALKLVIPTDLFVDLDARLNVEAYGAQPSGGTSTVFCTLVYTRCGNDIKPALTFFKSNKSDFDVLTLIRAYYADLITNKLEVNQQCNINGLKFGVMCTVGYTDSSHSINQQSLCIRGSSLLVTSISNFFVNYTGWRVFA</sequence>
<feature type="chain" id="PRO_0000405763" description="Triplex capsid protein 1">
    <location>
        <begin position="1"/>
        <end position="334"/>
    </location>
</feature>
<keyword id="KW-0167">Capsid protein</keyword>
<keyword id="KW-1048">Host nucleus</keyword>
<keyword id="KW-1185">Reference proteome</keyword>
<keyword id="KW-0946">Virion</keyword>
<reference key="1">
    <citation type="journal article" date="1997" name="J. Virol.">
        <title>Primary structure of the alcelaphine herpesvirus 1 genome.</title>
        <authorList>
            <person name="Ensser A."/>
            <person name="Pflanz R."/>
            <person name="Fleckenstein B."/>
        </authorList>
    </citation>
    <scope>NUCLEOTIDE SEQUENCE [LARGE SCALE GENOMIC DNA]</scope>
</reference>
<accession>O36412</accession>
<proteinExistence type="inferred from homology"/>
<comment type="function">
    <text evidence="1">Structural component of the T=16 icosahedral capsid. The capsid is composed of pentamers and hexamers of major capsid protein/MCP, which are linked together by heterotrimers called triplexes. These triplexes are formed by a single molecule of triplex protein 1/TRX1 and two copies of triplex protein 2/TRX2. Additionally, TRX1 is required for efficient transport of TRX2 to the nucleus, which is the site of capsid assembly.</text>
</comment>
<comment type="subunit">
    <text evidence="1">Interacts with TRX2, MCP and capsid vertex component 2/CVC2.</text>
</comment>
<comment type="subcellular location">
    <subcellularLocation>
        <location evidence="1">Virion</location>
    </subcellularLocation>
    <subcellularLocation>
        <location evidence="1">Host nucleus</location>
    </subcellularLocation>
</comment>
<comment type="similarity">
    <text evidence="1">Belongs to the herpesviridae TRX1 protein family.</text>
</comment>
<protein>
    <recommendedName>
        <fullName evidence="1">Triplex capsid protein 1</fullName>
    </recommendedName>
</protein>
<dbReference type="EMBL" id="AF005370">
    <property type="protein sequence ID" value="AAC58109.1"/>
    <property type="molecule type" value="Genomic_DNA"/>
</dbReference>
<dbReference type="PIR" id="T03157">
    <property type="entry name" value="T03157"/>
</dbReference>
<dbReference type="RefSeq" id="NP_065561.1">
    <property type="nucleotide sequence ID" value="NC_002531.1"/>
</dbReference>
<dbReference type="SMR" id="O36412"/>
<dbReference type="KEGG" id="vg:911786"/>
<dbReference type="Proteomes" id="UP000000941">
    <property type="component" value="Segment"/>
</dbReference>
<dbReference type="GO" id="GO:0042025">
    <property type="term" value="C:host cell nucleus"/>
    <property type="evidence" value="ECO:0007669"/>
    <property type="project" value="UniProtKB-SubCell"/>
</dbReference>
<dbReference type="GO" id="GO:0019028">
    <property type="term" value="C:viral capsid"/>
    <property type="evidence" value="ECO:0007669"/>
    <property type="project" value="UniProtKB-KW"/>
</dbReference>
<dbReference type="GO" id="GO:0003677">
    <property type="term" value="F:DNA binding"/>
    <property type="evidence" value="ECO:0007669"/>
    <property type="project" value="InterPro"/>
</dbReference>
<dbReference type="GO" id="GO:0019069">
    <property type="term" value="P:viral capsid assembly"/>
    <property type="evidence" value="ECO:0007669"/>
    <property type="project" value="InterPro"/>
</dbReference>
<dbReference type="HAMAP" id="MF_04018">
    <property type="entry name" value="HSV_TRX1"/>
    <property type="match status" value="1"/>
</dbReference>
<dbReference type="InterPro" id="IPR004999">
    <property type="entry name" value="Herpes_1"/>
</dbReference>
<dbReference type="Pfam" id="PF03327">
    <property type="entry name" value="Herpes_VP19C"/>
    <property type="match status" value="1"/>
</dbReference>
<organismHost>
    <name type="scientific">Connochaetes taurinus</name>
    <name type="common">Blue wildebeest</name>
    <dbReference type="NCBI Taxonomy" id="9927"/>
</organismHost>
<gene>
    <name evidence="1" type="primary">TRX1</name>
    <name type="ordered locus">62</name>
</gene>
<organism>
    <name type="scientific">Alcelaphine herpesvirus 1 (strain C500)</name>
    <name type="common">AlHV-1</name>
    <name type="synonym">Malignant catarrhal fever virus</name>
    <dbReference type="NCBI Taxonomy" id="654901"/>
    <lineage>
        <taxon>Viruses</taxon>
        <taxon>Duplodnaviria</taxon>
        <taxon>Heunggongvirae</taxon>
        <taxon>Peploviricota</taxon>
        <taxon>Herviviricetes</taxon>
        <taxon>Herpesvirales</taxon>
        <taxon>Orthoherpesviridae</taxon>
        <taxon>Gammaherpesvirinae</taxon>
        <taxon>Macavirus</taxon>
        <taxon>Macavirus alcelaphinegamma1</taxon>
    </lineage>
</organism>